<dbReference type="EC" id="2.7.8.7" evidence="1"/>
<dbReference type="EMBL" id="CP000394">
    <property type="protein sequence ID" value="ABI61888.1"/>
    <property type="molecule type" value="Genomic_DNA"/>
</dbReference>
<dbReference type="RefSeq" id="WP_011631697.1">
    <property type="nucleotide sequence ID" value="NC_008343.2"/>
</dbReference>
<dbReference type="SMR" id="Q0BTG4"/>
<dbReference type="STRING" id="391165.GbCGDNIH1_0990"/>
<dbReference type="KEGG" id="gbe:GbCGDNIH1_0990"/>
<dbReference type="eggNOG" id="COG0736">
    <property type="taxonomic scope" value="Bacteria"/>
</dbReference>
<dbReference type="HOGENOM" id="CLU_089696_0_2_5"/>
<dbReference type="OrthoDB" id="517356at2"/>
<dbReference type="Proteomes" id="UP000001963">
    <property type="component" value="Chromosome"/>
</dbReference>
<dbReference type="GO" id="GO:0005737">
    <property type="term" value="C:cytoplasm"/>
    <property type="evidence" value="ECO:0007669"/>
    <property type="project" value="UniProtKB-SubCell"/>
</dbReference>
<dbReference type="GO" id="GO:0008897">
    <property type="term" value="F:holo-[acyl-carrier-protein] synthase activity"/>
    <property type="evidence" value="ECO:0007669"/>
    <property type="project" value="UniProtKB-UniRule"/>
</dbReference>
<dbReference type="GO" id="GO:0000287">
    <property type="term" value="F:magnesium ion binding"/>
    <property type="evidence" value="ECO:0007669"/>
    <property type="project" value="UniProtKB-UniRule"/>
</dbReference>
<dbReference type="GO" id="GO:0006633">
    <property type="term" value="P:fatty acid biosynthetic process"/>
    <property type="evidence" value="ECO:0007669"/>
    <property type="project" value="UniProtKB-UniRule"/>
</dbReference>
<dbReference type="Gene3D" id="3.90.470.20">
    <property type="entry name" value="4'-phosphopantetheinyl transferase domain"/>
    <property type="match status" value="1"/>
</dbReference>
<dbReference type="HAMAP" id="MF_00101">
    <property type="entry name" value="AcpS"/>
    <property type="match status" value="1"/>
</dbReference>
<dbReference type="InterPro" id="IPR008278">
    <property type="entry name" value="4-PPantetheinyl_Trfase_dom"/>
</dbReference>
<dbReference type="InterPro" id="IPR037143">
    <property type="entry name" value="4-PPantetheinyl_Trfase_dom_sf"/>
</dbReference>
<dbReference type="InterPro" id="IPR002582">
    <property type="entry name" value="ACPS"/>
</dbReference>
<dbReference type="InterPro" id="IPR004568">
    <property type="entry name" value="Ppantetheine-prot_Trfase_dom"/>
</dbReference>
<dbReference type="NCBIfam" id="TIGR00516">
    <property type="entry name" value="acpS"/>
    <property type="match status" value="1"/>
</dbReference>
<dbReference type="NCBIfam" id="TIGR00556">
    <property type="entry name" value="pantethn_trn"/>
    <property type="match status" value="1"/>
</dbReference>
<dbReference type="Pfam" id="PF01648">
    <property type="entry name" value="ACPS"/>
    <property type="match status" value="1"/>
</dbReference>
<dbReference type="SUPFAM" id="SSF56214">
    <property type="entry name" value="4'-phosphopantetheinyl transferase"/>
    <property type="match status" value="1"/>
</dbReference>
<proteinExistence type="inferred from homology"/>
<gene>
    <name evidence="1" type="primary">acpS</name>
    <name type="ordered locus">GbCGDNIH1_0990</name>
</gene>
<evidence type="ECO:0000255" key="1">
    <source>
        <dbReference type="HAMAP-Rule" id="MF_00101"/>
    </source>
</evidence>
<accession>Q0BTG4</accession>
<feature type="chain" id="PRO_1000008429" description="Holo-[acyl-carrier-protein] synthase">
    <location>
        <begin position="1"/>
        <end position="145"/>
    </location>
</feature>
<feature type="binding site" evidence="1">
    <location>
        <position position="8"/>
    </location>
    <ligand>
        <name>Mg(2+)</name>
        <dbReference type="ChEBI" id="CHEBI:18420"/>
    </ligand>
</feature>
<feature type="binding site" evidence="1">
    <location>
        <position position="59"/>
    </location>
    <ligand>
        <name>Mg(2+)</name>
        <dbReference type="ChEBI" id="CHEBI:18420"/>
    </ligand>
</feature>
<reference key="1">
    <citation type="journal article" date="2007" name="J. Bacteriol.">
        <title>Genome sequence analysis of the emerging human pathogenic acetic acid bacterium Granulibacter bethesdensis.</title>
        <authorList>
            <person name="Greenberg D.E."/>
            <person name="Porcella S.F."/>
            <person name="Zelazny A.M."/>
            <person name="Virtaneva K."/>
            <person name="Sturdevant D.E."/>
            <person name="Kupko J.J. III"/>
            <person name="Barbian K.D."/>
            <person name="Babar A."/>
            <person name="Dorward D.W."/>
            <person name="Holland S.M."/>
        </authorList>
    </citation>
    <scope>NUCLEOTIDE SEQUENCE [LARGE SCALE GENOMIC DNA]</scope>
    <source>
        <strain>ATCC BAA-1260 / CGDNIH1</strain>
    </source>
</reference>
<organism>
    <name type="scientific">Granulibacter bethesdensis (strain ATCC BAA-1260 / CGDNIH1)</name>
    <dbReference type="NCBI Taxonomy" id="391165"/>
    <lineage>
        <taxon>Bacteria</taxon>
        <taxon>Pseudomonadati</taxon>
        <taxon>Pseudomonadota</taxon>
        <taxon>Alphaproteobacteria</taxon>
        <taxon>Acetobacterales</taxon>
        <taxon>Acetobacteraceae</taxon>
        <taxon>Granulibacter</taxon>
    </lineage>
</organism>
<comment type="function">
    <text evidence="1">Transfers the 4'-phosphopantetheine moiety from coenzyme A to a Ser of acyl-carrier-protein.</text>
</comment>
<comment type="catalytic activity">
    <reaction evidence="1">
        <text>apo-[ACP] + CoA = holo-[ACP] + adenosine 3',5'-bisphosphate + H(+)</text>
        <dbReference type="Rhea" id="RHEA:12068"/>
        <dbReference type="Rhea" id="RHEA-COMP:9685"/>
        <dbReference type="Rhea" id="RHEA-COMP:9690"/>
        <dbReference type="ChEBI" id="CHEBI:15378"/>
        <dbReference type="ChEBI" id="CHEBI:29999"/>
        <dbReference type="ChEBI" id="CHEBI:57287"/>
        <dbReference type="ChEBI" id="CHEBI:58343"/>
        <dbReference type="ChEBI" id="CHEBI:64479"/>
        <dbReference type="EC" id="2.7.8.7"/>
    </reaction>
</comment>
<comment type="cofactor">
    <cofactor evidence="1">
        <name>Mg(2+)</name>
        <dbReference type="ChEBI" id="CHEBI:18420"/>
    </cofactor>
</comment>
<comment type="subcellular location">
    <subcellularLocation>
        <location evidence="1">Cytoplasm</location>
    </subcellularLocation>
</comment>
<comment type="similarity">
    <text evidence="1">Belongs to the P-Pant transferase superfamily. AcpS family.</text>
</comment>
<name>ACPS_GRABC</name>
<sequence length="145" mass="15398">MIIGIGSDICDIRRIETVLERHGERFLSRVFTTAERAKAERRNGRMRMGTYAKRFAAKEACAKALGTGFAGGVFMSDLGVVNLSSGQPTLRLTGGAAARLSAMTPSGMGAQVLLTMTDEYPYAYAQVVISAVPLPTSLIGGRGLP</sequence>
<keyword id="KW-0963">Cytoplasm</keyword>
<keyword id="KW-0275">Fatty acid biosynthesis</keyword>
<keyword id="KW-0276">Fatty acid metabolism</keyword>
<keyword id="KW-0444">Lipid biosynthesis</keyword>
<keyword id="KW-0443">Lipid metabolism</keyword>
<keyword id="KW-0460">Magnesium</keyword>
<keyword id="KW-0479">Metal-binding</keyword>
<keyword id="KW-1185">Reference proteome</keyword>
<keyword id="KW-0808">Transferase</keyword>
<protein>
    <recommendedName>
        <fullName evidence="1">Holo-[acyl-carrier-protein] synthase</fullName>
        <shortName evidence="1">Holo-ACP synthase</shortName>
        <ecNumber evidence="1">2.7.8.7</ecNumber>
    </recommendedName>
    <alternativeName>
        <fullName evidence="1">4'-phosphopantetheinyl transferase AcpS</fullName>
    </alternativeName>
</protein>